<dbReference type="EC" id="3.1.1.-" evidence="8"/>
<dbReference type="EMBL" id="CM000580">
    <property type="protein sequence ID" value="EWG54405.1"/>
    <property type="molecule type" value="Genomic_DNA"/>
</dbReference>
<dbReference type="RefSeq" id="XP_018760596.1">
    <property type="nucleotide sequence ID" value="XM_018901975.1"/>
</dbReference>
<dbReference type="SMR" id="W7N2P0"/>
<dbReference type="GeneID" id="30070055"/>
<dbReference type="KEGG" id="fvr:FVEG_12625"/>
<dbReference type="VEuPathDB" id="FungiDB:FVEG_12625"/>
<dbReference type="eggNOG" id="KOG3043">
    <property type="taxonomic scope" value="Eukaryota"/>
</dbReference>
<dbReference type="OrthoDB" id="2354at110618"/>
<dbReference type="Proteomes" id="UP000009096">
    <property type="component" value="Chromosome 3"/>
</dbReference>
<dbReference type="GO" id="GO:0016787">
    <property type="term" value="F:hydrolase activity"/>
    <property type="evidence" value="ECO:0007669"/>
    <property type="project" value="UniProtKB-KW"/>
</dbReference>
<dbReference type="Gene3D" id="3.40.50.1820">
    <property type="entry name" value="alpha/beta hydrolase"/>
    <property type="match status" value="2"/>
</dbReference>
<dbReference type="InterPro" id="IPR029058">
    <property type="entry name" value="AB_hydrolase_fold"/>
</dbReference>
<dbReference type="InterPro" id="IPR002925">
    <property type="entry name" value="Dienelactn_hydro"/>
</dbReference>
<dbReference type="PANTHER" id="PTHR17630">
    <property type="entry name" value="DIENELACTONE HYDROLASE"/>
    <property type="match status" value="1"/>
</dbReference>
<dbReference type="PANTHER" id="PTHR17630:SF44">
    <property type="entry name" value="PROTEIN AIM2"/>
    <property type="match status" value="1"/>
</dbReference>
<dbReference type="Pfam" id="PF01738">
    <property type="entry name" value="DLH"/>
    <property type="match status" value="2"/>
</dbReference>
<dbReference type="SUPFAM" id="SSF53474">
    <property type="entry name" value="alpha/beta-Hydrolases"/>
    <property type="match status" value="1"/>
</dbReference>
<comment type="function">
    <text evidence="2 3 4 5 8">Dienlactone hydrolase; part of the Fusarium detoxification of benzoxazolinone cluster 2 (FDB2) involved in the degradation of benzoxazolinones produced by the host plant (PubMed:19302487, PubMed:26808652). Maize, wheat, and rye produce the 2 benzoxazinone phytoanticipins 2,4-dihy-droxy-7-methoxy-1,4-benzoxazin-3-one (DIMBOA) and 2,4-dihydroxy-1,4-benzoxazin-3-one (DIBOA) that, due to their inherent instability once released, spontaneously degrade to the more stable corresponding benzoxazolinones, 6-methoxy-2-benzoxazolinone (MBOA) and 2-benzoxazolinone (BOA), respectively (PubMed:11876429). The first step in the detoxification of benzoxazolinones involves the hydrolysis of the cyclic ester bond of benzoxazolinones by the FDB1 cluster gamma-lactamase MBL1 to aminophenols (PubMed:12788712, PubMed:26808652). MBL1 is able to convert BOA into 2-aminophenol (2-AP), as well as MBOA into 5-methoxy-2-aminophenol (2-AMP) (PubMed:12788712, PubMed:26808652). The FDB2 cluster N-malonyltransferase FDB2/NAT1 then metabolizes aminophenols via N-malonylation to non-toxic malonamic acids (PubMed:12788712, PubMed:19302487). FDB2/NAT1 converts 2-AP into N-(2-hydroxyphenyl) malonamic acid (HPMA) and 2-AMP into N-(2-hydroxy-4-methoxyphenyl) malonamic acid (HMPMA) (PubMed:12788712, PubMed:19302487). The duplicated dienlactone hydrolases DLH1 and DLH2 may provide redundant function for hydrolyzing the lactone moiety in the BOA molecule (Probable). The roles of the amidases and other enzymes encoded by the 2 FDB clusters have not been identified so far (Probable).</text>
</comment>
<comment type="pathway">
    <text evidence="8">Xenobiotic degradation.</text>
</comment>
<comment type="induction">
    <text evidence="5">Expression is induced in response to 2-benzoxasolinone (BOA) exposure.</text>
</comment>
<comment type="miscellaneous">
    <text evidence="8">Fusarium verticillioides possesses 2 unlinked loci, FDB1 and FDB2, necessary for detoxification of antimicrobial compounds produced by maize, including 2-benzoxazolinone (BOA) (Probable). The FDB2 cluster arose as a duplication of the FDB1 cluster with rearrangement and expansion by incorporating additional genes (Probable).</text>
</comment>
<comment type="similarity">
    <text evidence="7">Belongs to the dienelactone hydrolase family.</text>
</comment>
<feature type="chain" id="PRO_0000454601" description="Dienlactone hydrolase 2">
    <location>
        <begin position="1"/>
        <end position="234"/>
    </location>
</feature>
<feature type="active site" evidence="1">
    <location>
        <position position="143"/>
    </location>
</feature>
<feature type="active site" evidence="1">
    <location>
        <position position="167"/>
    </location>
</feature>
<feature type="active site" evidence="1">
    <location>
        <position position="199"/>
    </location>
</feature>
<organism>
    <name type="scientific">Gibberella moniliformis (strain M3125 / FGSC 7600)</name>
    <name type="common">Maize ear and stalk rot fungus</name>
    <name type="synonym">Fusarium verticillioides</name>
    <dbReference type="NCBI Taxonomy" id="334819"/>
    <lineage>
        <taxon>Eukaryota</taxon>
        <taxon>Fungi</taxon>
        <taxon>Dikarya</taxon>
        <taxon>Ascomycota</taxon>
        <taxon>Pezizomycotina</taxon>
        <taxon>Sordariomycetes</taxon>
        <taxon>Hypocreomycetidae</taxon>
        <taxon>Hypocreales</taxon>
        <taxon>Nectriaceae</taxon>
        <taxon>Fusarium</taxon>
        <taxon>Fusarium fujikuroi species complex</taxon>
    </lineage>
</organism>
<name>DLH2_GIBM7</name>
<keyword id="KW-0378">Hydrolase</keyword>
<keyword id="KW-1185">Reference proteome</keyword>
<proteinExistence type="evidence at transcript level"/>
<evidence type="ECO:0000250" key="1">
    <source>
        <dbReference type="UniProtKB" id="P0A114"/>
    </source>
</evidence>
<evidence type="ECO:0000269" key="2">
    <source>
    </source>
</evidence>
<evidence type="ECO:0000269" key="3">
    <source>
    </source>
</evidence>
<evidence type="ECO:0000269" key="4">
    <source>
    </source>
</evidence>
<evidence type="ECO:0000269" key="5">
    <source>
    </source>
</evidence>
<evidence type="ECO:0000303" key="6">
    <source>
    </source>
</evidence>
<evidence type="ECO:0000305" key="7"/>
<evidence type="ECO:0000305" key="8">
    <source>
    </source>
</evidence>
<reference key="1">
    <citation type="journal article" date="2010" name="Nature">
        <title>Comparative genomics reveals mobile pathogenicity chromosomes in Fusarium.</title>
        <authorList>
            <person name="Ma L.-J."/>
            <person name="van der Does H.C."/>
            <person name="Borkovich K.A."/>
            <person name="Coleman J.J."/>
            <person name="Daboussi M.-J."/>
            <person name="Di Pietro A."/>
            <person name="Dufresne M."/>
            <person name="Freitag M."/>
            <person name="Grabherr M."/>
            <person name="Henrissat B."/>
            <person name="Houterman P.M."/>
            <person name="Kang S."/>
            <person name="Shim W.-B."/>
            <person name="Woloshuk C."/>
            <person name="Xie X."/>
            <person name="Xu J.-R."/>
            <person name="Antoniw J."/>
            <person name="Baker S.E."/>
            <person name="Bluhm B.H."/>
            <person name="Breakspear A."/>
            <person name="Brown D.W."/>
            <person name="Butchko R.A.E."/>
            <person name="Chapman S."/>
            <person name="Coulson R."/>
            <person name="Coutinho P.M."/>
            <person name="Danchin E.G.J."/>
            <person name="Diener A."/>
            <person name="Gale L.R."/>
            <person name="Gardiner D.M."/>
            <person name="Goff S."/>
            <person name="Hammond-Kosack K.E."/>
            <person name="Hilburn K."/>
            <person name="Hua-Van A."/>
            <person name="Jonkers W."/>
            <person name="Kazan K."/>
            <person name="Kodira C.D."/>
            <person name="Koehrsen M."/>
            <person name="Kumar L."/>
            <person name="Lee Y.-H."/>
            <person name="Li L."/>
            <person name="Manners J.M."/>
            <person name="Miranda-Saavedra D."/>
            <person name="Mukherjee M."/>
            <person name="Park G."/>
            <person name="Park J."/>
            <person name="Park S.-Y."/>
            <person name="Proctor R.H."/>
            <person name="Regev A."/>
            <person name="Ruiz-Roldan M.C."/>
            <person name="Sain D."/>
            <person name="Sakthikumar S."/>
            <person name="Sykes S."/>
            <person name="Schwartz D.C."/>
            <person name="Turgeon B.G."/>
            <person name="Wapinski I."/>
            <person name="Yoder O."/>
            <person name="Young S."/>
            <person name="Zeng Q."/>
            <person name="Zhou S."/>
            <person name="Galagan J."/>
            <person name="Cuomo C.A."/>
            <person name="Kistler H.C."/>
            <person name="Rep M."/>
        </authorList>
    </citation>
    <scope>NUCLEOTIDE SEQUENCE [LARGE SCALE GENOMIC DNA]</scope>
    <source>
        <strain>M3125 / FGSC 7600</strain>
    </source>
</reference>
<reference key="2">
    <citation type="journal article" date="2002" name="Mol. Plant Microbe Interact.">
        <title>Fdb1 and Fdb2, Fusarium verticillioides loci necessary for detoxification of preformed antimicrobials from corn.</title>
        <authorList>
            <person name="Glenn A.E."/>
            <person name="Gold S.E."/>
            <person name="Bacon C.W."/>
        </authorList>
    </citation>
    <scope>FUNCTION</scope>
</reference>
<reference key="3">
    <citation type="journal article" date="2003" name="Appl. Environ. Microbiol.">
        <title>Identification of intermediate and branch metabolites resulting from biotransformation of 2-benzoxazolinone by Fusarium verticillioides.</title>
        <authorList>
            <person name="Glenn A.E."/>
            <person name="Meredith F.I."/>
            <person name="Morrison W.H. III"/>
            <person name="Bacon C.W."/>
        </authorList>
    </citation>
    <scope>FUNCTION</scope>
</reference>
<reference key="4">
    <citation type="journal article" date="2009" name="J. Appl. Microbiol.">
        <title>FDB2 encodes a member of the arylamine N-acetyltransferase family and is necessary for biotransformation of benzoxazolinones by Fusarium verticillioides.</title>
        <authorList>
            <person name="Glenn A.E."/>
            <person name="Bacon C.W."/>
        </authorList>
    </citation>
    <scope>FUNCTION</scope>
</reference>
<reference key="5">
    <citation type="journal article" date="2016" name="PLoS ONE">
        <title>Two horizontally transferred xenobiotic resistance gene clusters associated with detoxification of benzoxazolinones by Fusarium species.</title>
        <authorList>
            <person name="Glenn A.E."/>
            <person name="Davis C.B."/>
            <person name="Gao M."/>
            <person name="Gold S.E."/>
            <person name="Mitchell T.R."/>
            <person name="Proctor R.H."/>
            <person name="Stewart J.E."/>
            <person name="Snook M.E."/>
        </authorList>
    </citation>
    <scope>FUNCTION</scope>
    <scope>INDUCTION</scope>
    <scope>PATHWAY</scope>
</reference>
<protein>
    <recommendedName>
        <fullName evidence="6">Dienlactone hydrolase 2</fullName>
        <ecNumber evidence="8">3.1.1.-</ecNumber>
    </recommendedName>
    <alternativeName>
        <fullName evidence="6">Fusarium detoxification of benzoxazolinone cluster 2 protein DLH2</fullName>
        <shortName evidence="6">FDB2 cluster protein DLH2</shortName>
    </alternativeName>
</protein>
<accession>W7N2P0</accession>
<sequence length="234" mass="26375">MDNVLARPADICCLKGSFHSGDATGSTIQIDGIDTYVAKPHPDKSNGNVLLFFPDAFGLHINSFLMMDAFAECGYLTLGVDYFLGDPVTKHSLTPLSDPNFDFESWKNKHLKASEDAAARWVKAVKAQYGSSEDVRFACVGYCWGARFVCQQLSADAPIFFSVPSTDKLFEPEQRSRTIEILTENNKQFNMQVFANVGHGFASRARLTDPYEKWAKEATFKSFVDWFDFWMEKK</sequence>
<gene>
    <name evidence="6" type="primary">DLH2</name>
    <name type="ORF">FVEG_12625</name>
</gene>